<dbReference type="EMBL" id="AJ297884">
    <property type="protein sequence ID" value="CAC17789.1"/>
    <property type="molecule type" value="mRNA"/>
</dbReference>
<dbReference type="EMBL" id="AK170415">
    <property type="protein sequence ID" value="BAE41781.1"/>
    <property type="molecule type" value="mRNA"/>
</dbReference>
<dbReference type="EMBL" id="BC016119">
    <property type="protein sequence ID" value="AAH16119.1"/>
    <property type="molecule type" value="mRNA"/>
</dbReference>
<dbReference type="EMBL" id="BC016466">
    <property type="protein sequence ID" value="AAH16466.1"/>
    <property type="molecule type" value="mRNA"/>
</dbReference>
<dbReference type="CCDS" id="CCDS29140.1"/>
<dbReference type="RefSeq" id="NP_001347743.1">
    <property type="nucleotide sequence ID" value="NM_001360814.1"/>
</dbReference>
<dbReference type="RefSeq" id="NP_109674.2">
    <property type="nucleotide sequence ID" value="NM_030749.2"/>
</dbReference>
<dbReference type="RefSeq" id="XP_006526428.1">
    <property type="nucleotide sequence ID" value="XM_006526365.4"/>
</dbReference>
<dbReference type="RefSeq" id="XP_006526429.1">
    <property type="nucleotide sequence ID" value="XM_006526366.3"/>
</dbReference>
<dbReference type="RefSeq" id="XP_011245345.1">
    <property type="nucleotide sequence ID" value="XM_011247043.3"/>
</dbReference>
<dbReference type="RefSeq" id="XP_030106494.1">
    <property type="nucleotide sequence ID" value="XM_030250634.1"/>
</dbReference>
<dbReference type="RefSeq" id="XP_036017203.1">
    <property type="nucleotide sequence ID" value="XM_036161310.1"/>
</dbReference>
<dbReference type="SMR" id="Q9EPK6"/>
<dbReference type="BioGRID" id="219881">
    <property type="interactions" value="4"/>
</dbReference>
<dbReference type="FunCoup" id="Q9EPK6">
    <property type="interactions" value="1563"/>
</dbReference>
<dbReference type="STRING" id="10090.ENSMUSP00000025215"/>
<dbReference type="GlyConnect" id="2568">
    <property type="glycosylation" value="3 N-Linked glycans (1 site)"/>
</dbReference>
<dbReference type="GlyCosmos" id="Q9EPK6">
    <property type="glycosylation" value="2 sites, 3 glycans"/>
</dbReference>
<dbReference type="GlyGen" id="Q9EPK6">
    <property type="glycosylation" value="3 sites, 4 N-linked glycans (1 site), 1 O-linked glycan (1 site)"/>
</dbReference>
<dbReference type="iPTMnet" id="Q9EPK6"/>
<dbReference type="PhosphoSitePlus" id="Q9EPK6"/>
<dbReference type="SwissPalm" id="Q9EPK6"/>
<dbReference type="PaxDb" id="10090-ENSMUSP00000025215"/>
<dbReference type="PeptideAtlas" id="Q9EPK6"/>
<dbReference type="ProteomicsDB" id="261043"/>
<dbReference type="Pumba" id="Q9EPK6"/>
<dbReference type="Antibodypedia" id="2386">
    <property type="antibodies" value="324 antibodies from 32 providers"/>
</dbReference>
<dbReference type="Ensembl" id="ENSMUST00000025215.10">
    <property type="protein sequence ID" value="ENSMUSP00000025215.9"/>
    <property type="gene ID" value="ENSMUSG00000024357.11"/>
</dbReference>
<dbReference type="GeneID" id="81500"/>
<dbReference type="KEGG" id="mmu:81500"/>
<dbReference type="UCSC" id="uc008emc.2">
    <property type="organism name" value="mouse"/>
</dbReference>
<dbReference type="AGR" id="MGI:1932040"/>
<dbReference type="CTD" id="64374"/>
<dbReference type="MGI" id="MGI:1932040">
    <property type="gene designation" value="Sil1"/>
</dbReference>
<dbReference type="VEuPathDB" id="HostDB:ENSMUSG00000024357"/>
<dbReference type="eggNOG" id="KOG2160">
    <property type="taxonomic scope" value="Eukaryota"/>
</dbReference>
<dbReference type="GeneTree" id="ENSGT00940000153909"/>
<dbReference type="HOGENOM" id="CLU_046547_1_0_1"/>
<dbReference type="InParanoid" id="Q9EPK6"/>
<dbReference type="OMA" id="FQPTHEW"/>
<dbReference type="OrthoDB" id="448649at2759"/>
<dbReference type="PhylomeDB" id="Q9EPK6"/>
<dbReference type="TreeFam" id="TF324307"/>
<dbReference type="BioGRID-ORCS" id="81500">
    <property type="hits" value="2 hits in 77 CRISPR screens"/>
</dbReference>
<dbReference type="ChiTaRS" id="Sil1">
    <property type="organism name" value="mouse"/>
</dbReference>
<dbReference type="PRO" id="PR:Q9EPK6"/>
<dbReference type="Proteomes" id="UP000000589">
    <property type="component" value="Chromosome 18"/>
</dbReference>
<dbReference type="RNAct" id="Q9EPK6">
    <property type="molecule type" value="protein"/>
</dbReference>
<dbReference type="Bgee" id="ENSMUSG00000024357">
    <property type="expression patterns" value="Expressed in spermatocyte and 247 other cell types or tissues"/>
</dbReference>
<dbReference type="ExpressionAtlas" id="Q9EPK6">
    <property type="expression patterns" value="baseline and differential"/>
</dbReference>
<dbReference type="GO" id="GO:0005783">
    <property type="term" value="C:endoplasmic reticulum"/>
    <property type="evidence" value="ECO:0000314"/>
    <property type="project" value="MGI"/>
</dbReference>
<dbReference type="GO" id="GO:0005788">
    <property type="term" value="C:endoplasmic reticulum lumen"/>
    <property type="evidence" value="ECO:0007669"/>
    <property type="project" value="UniProtKB-SubCell"/>
</dbReference>
<dbReference type="GO" id="GO:0000774">
    <property type="term" value="F:adenyl-nucleotide exchange factor activity"/>
    <property type="evidence" value="ECO:0007669"/>
    <property type="project" value="Ensembl"/>
</dbReference>
<dbReference type="GO" id="GO:0042802">
    <property type="term" value="F:identical protein binding"/>
    <property type="evidence" value="ECO:0007669"/>
    <property type="project" value="Ensembl"/>
</dbReference>
<dbReference type="GO" id="GO:0015031">
    <property type="term" value="P:protein transport"/>
    <property type="evidence" value="ECO:0007669"/>
    <property type="project" value="UniProtKB-KW"/>
</dbReference>
<dbReference type="FunFam" id="1.25.10.10:FF:000148">
    <property type="entry name" value="SIL1 nucleotide exchange factor"/>
    <property type="match status" value="1"/>
</dbReference>
<dbReference type="Gene3D" id="1.25.10.10">
    <property type="entry name" value="Leucine-rich Repeat Variant"/>
    <property type="match status" value="1"/>
</dbReference>
<dbReference type="InterPro" id="IPR011989">
    <property type="entry name" value="ARM-like"/>
</dbReference>
<dbReference type="InterPro" id="IPR016024">
    <property type="entry name" value="ARM-type_fold"/>
</dbReference>
<dbReference type="InterPro" id="IPR050693">
    <property type="entry name" value="Hsp70_NEF-Inhibitors"/>
</dbReference>
<dbReference type="PANTHER" id="PTHR19316:SF35">
    <property type="entry name" value="NUCLEOTIDE EXCHANGE FACTOR SIL1"/>
    <property type="match status" value="1"/>
</dbReference>
<dbReference type="PANTHER" id="PTHR19316">
    <property type="entry name" value="PROTEIN FOLDING REGULATOR"/>
    <property type="match status" value="1"/>
</dbReference>
<dbReference type="SUPFAM" id="SSF48371">
    <property type="entry name" value="ARM repeat"/>
    <property type="match status" value="1"/>
</dbReference>
<reference key="1">
    <citation type="journal article" date="2000" name="EMBO J.">
        <title>LHS1 and SIL1 provide a lumenal function that is essential for protein translocation into the endoplasmic reticulum.</title>
        <authorList>
            <person name="Tyson J.R."/>
            <person name="Stirling C.J."/>
        </authorList>
    </citation>
    <scope>NUCLEOTIDE SEQUENCE [MRNA]</scope>
</reference>
<reference key="2">
    <citation type="journal article" date="2005" name="Science">
        <title>The transcriptional landscape of the mammalian genome.</title>
        <authorList>
            <person name="Carninci P."/>
            <person name="Kasukawa T."/>
            <person name="Katayama S."/>
            <person name="Gough J."/>
            <person name="Frith M.C."/>
            <person name="Maeda N."/>
            <person name="Oyama R."/>
            <person name="Ravasi T."/>
            <person name="Lenhard B."/>
            <person name="Wells C."/>
            <person name="Kodzius R."/>
            <person name="Shimokawa K."/>
            <person name="Bajic V.B."/>
            <person name="Brenner S.E."/>
            <person name="Batalov S."/>
            <person name="Forrest A.R."/>
            <person name="Zavolan M."/>
            <person name="Davis M.J."/>
            <person name="Wilming L.G."/>
            <person name="Aidinis V."/>
            <person name="Allen J.E."/>
            <person name="Ambesi-Impiombato A."/>
            <person name="Apweiler R."/>
            <person name="Aturaliya R.N."/>
            <person name="Bailey T.L."/>
            <person name="Bansal M."/>
            <person name="Baxter L."/>
            <person name="Beisel K.W."/>
            <person name="Bersano T."/>
            <person name="Bono H."/>
            <person name="Chalk A.M."/>
            <person name="Chiu K.P."/>
            <person name="Choudhary V."/>
            <person name="Christoffels A."/>
            <person name="Clutterbuck D.R."/>
            <person name="Crowe M.L."/>
            <person name="Dalla E."/>
            <person name="Dalrymple B.P."/>
            <person name="de Bono B."/>
            <person name="Della Gatta G."/>
            <person name="di Bernardo D."/>
            <person name="Down T."/>
            <person name="Engstrom P."/>
            <person name="Fagiolini M."/>
            <person name="Faulkner G."/>
            <person name="Fletcher C.F."/>
            <person name="Fukushima T."/>
            <person name="Furuno M."/>
            <person name="Futaki S."/>
            <person name="Gariboldi M."/>
            <person name="Georgii-Hemming P."/>
            <person name="Gingeras T.R."/>
            <person name="Gojobori T."/>
            <person name="Green R.E."/>
            <person name="Gustincich S."/>
            <person name="Harbers M."/>
            <person name="Hayashi Y."/>
            <person name="Hensch T.K."/>
            <person name="Hirokawa N."/>
            <person name="Hill D."/>
            <person name="Huminiecki L."/>
            <person name="Iacono M."/>
            <person name="Ikeo K."/>
            <person name="Iwama A."/>
            <person name="Ishikawa T."/>
            <person name="Jakt M."/>
            <person name="Kanapin A."/>
            <person name="Katoh M."/>
            <person name="Kawasawa Y."/>
            <person name="Kelso J."/>
            <person name="Kitamura H."/>
            <person name="Kitano H."/>
            <person name="Kollias G."/>
            <person name="Krishnan S.P."/>
            <person name="Kruger A."/>
            <person name="Kummerfeld S.K."/>
            <person name="Kurochkin I.V."/>
            <person name="Lareau L.F."/>
            <person name="Lazarevic D."/>
            <person name="Lipovich L."/>
            <person name="Liu J."/>
            <person name="Liuni S."/>
            <person name="McWilliam S."/>
            <person name="Madan Babu M."/>
            <person name="Madera M."/>
            <person name="Marchionni L."/>
            <person name="Matsuda H."/>
            <person name="Matsuzawa S."/>
            <person name="Miki H."/>
            <person name="Mignone F."/>
            <person name="Miyake S."/>
            <person name="Morris K."/>
            <person name="Mottagui-Tabar S."/>
            <person name="Mulder N."/>
            <person name="Nakano N."/>
            <person name="Nakauchi H."/>
            <person name="Ng P."/>
            <person name="Nilsson R."/>
            <person name="Nishiguchi S."/>
            <person name="Nishikawa S."/>
            <person name="Nori F."/>
            <person name="Ohara O."/>
            <person name="Okazaki Y."/>
            <person name="Orlando V."/>
            <person name="Pang K.C."/>
            <person name="Pavan W.J."/>
            <person name="Pavesi G."/>
            <person name="Pesole G."/>
            <person name="Petrovsky N."/>
            <person name="Piazza S."/>
            <person name="Reed J."/>
            <person name="Reid J.F."/>
            <person name="Ring B.Z."/>
            <person name="Ringwald M."/>
            <person name="Rost B."/>
            <person name="Ruan Y."/>
            <person name="Salzberg S.L."/>
            <person name="Sandelin A."/>
            <person name="Schneider C."/>
            <person name="Schoenbach C."/>
            <person name="Sekiguchi K."/>
            <person name="Semple C.A."/>
            <person name="Seno S."/>
            <person name="Sessa L."/>
            <person name="Sheng Y."/>
            <person name="Shibata Y."/>
            <person name="Shimada H."/>
            <person name="Shimada K."/>
            <person name="Silva D."/>
            <person name="Sinclair B."/>
            <person name="Sperling S."/>
            <person name="Stupka E."/>
            <person name="Sugiura K."/>
            <person name="Sultana R."/>
            <person name="Takenaka Y."/>
            <person name="Taki K."/>
            <person name="Tammoja K."/>
            <person name="Tan S.L."/>
            <person name="Tang S."/>
            <person name="Taylor M.S."/>
            <person name="Tegner J."/>
            <person name="Teichmann S.A."/>
            <person name="Ueda H.R."/>
            <person name="van Nimwegen E."/>
            <person name="Verardo R."/>
            <person name="Wei C.L."/>
            <person name="Yagi K."/>
            <person name="Yamanishi H."/>
            <person name="Zabarovsky E."/>
            <person name="Zhu S."/>
            <person name="Zimmer A."/>
            <person name="Hide W."/>
            <person name="Bult C."/>
            <person name="Grimmond S.M."/>
            <person name="Teasdale R.D."/>
            <person name="Liu E.T."/>
            <person name="Brusic V."/>
            <person name="Quackenbush J."/>
            <person name="Wahlestedt C."/>
            <person name="Mattick J.S."/>
            <person name="Hume D.A."/>
            <person name="Kai C."/>
            <person name="Sasaki D."/>
            <person name="Tomaru Y."/>
            <person name="Fukuda S."/>
            <person name="Kanamori-Katayama M."/>
            <person name="Suzuki M."/>
            <person name="Aoki J."/>
            <person name="Arakawa T."/>
            <person name="Iida J."/>
            <person name="Imamura K."/>
            <person name="Itoh M."/>
            <person name="Kato T."/>
            <person name="Kawaji H."/>
            <person name="Kawagashira N."/>
            <person name="Kawashima T."/>
            <person name="Kojima M."/>
            <person name="Kondo S."/>
            <person name="Konno H."/>
            <person name="Nakano K."/>
            <person name="Ninomiya N."/>
            <person name="Nishio T."/>
            <person name="Okada M."/>
            <person name="Plessy C."/>
            <person name="Shibata K."/>
            <person name="Shiraki T."/>
            <person name="Suzuki S."/>
            <person name="Tagami M."/>
            <person name="Waki K."/>
            <person name="Watahiki A."/>
            <person name="Okamura-Oho Y."/>
            <person name="Suzuki H."/>
            <person name="Kawai J."/>
            <person name="Hayashizaki Y."/>
        </authorList>
    </citation>
    <scope>NUCLEOTIDE SEQUENCE [LARGE SCALE MRNA]</scope>
</reference>
<reference key="3">
    <citation type="journal article" date="2004" name="Genome Res.">
        <title>The status, quality, and expansion of the NIH full-length cDNA project: the Mammalian Gene Collection (MGC).</title>
        <authorList>
            <consortium name="The MGC Project Team"/>
        </authorList>
    </citation>
    <scope>NUCLEOTIDE SEQUENCE [LARGE SCALE MRNA]</scope>
    <source>
        <strain>FVB/N</strain>
        <tissue>Mammary tumor</tissue>
    </source>
</reference>
<reference key="4">
    <citation type="journal article" date="2005" name="Nat. Genet.">
        <title>Protein accumulation and neurodegeneration in the woozy mutant mouse is caused by disruption of SIL1, a cochaperone of BiP.</title>
        <authorList>
            <person name="Zhao L."/>
            <person name="Longo-Guess C."/>
            <person name="Harris B.S."/>
            <person name="Lee J.-W."/>
            <person name="Ackerman S.L."/>
        </authorList>
    </citation>
    <scope>INTERACTION WITH HSPA5</scope>
    <scope>SUBCELLULAR LOCATION</scope>
    <scope>TISSUE SPECIFICITY</scope>
</reference>
<reference key="5">
    <citation type="journal article" date="2005" name="Nat. Genet.">
        <title>The gene disrupted in Marinesco-Sjoegren syndrome encodes SIL1, an HSPA5 cochaperone.</title>
        <authorList>
            <person name="Anttonen A.-K."/>
            <person name="Mahjneh I."/>
            <person name="Haemaelaeinen R.H."/>
            <person name="Lagier-Tourenne C."/>
            <person name="Kopra O."/>
            <person name="Waris L."/>
            <person name="Anttonen M."/>
            <person name="Joensuu T."/>
            <person name="Kalimo H."/>
            <person name="Paetau A."/>
            <person name="Tranebjaerg L."/>
            <person name="Chaigne D."/>
            <person name="Koenig M."/>
            <person name="Eeg-Olofsson O."/>
            <person name="Udd B."/>
            <person name="Somer M."/>
            <person name="Somer H."/>
            <person name="Lehesjoki A.-E."/>
        </authorList>
    </citation>
    <scope>TISSUE SPECIFICITY</scope>
    <scope>DEVELOPMENTAL STAGE</scope>
    <scope>DISRUPTION PHENOTYPE</scope>
</reference>
<reference key="6">
    <citation type="journal article" date="2005" name="Nat. Genet.">
        <title>Mutations in SIL1 cause Marinesco-Sjoegren syndrome, a cerebellar ataxia with cataract and myopathy.</title>
        <authorList>
            <person name="Senderek J."/>
            <person name="Krieger M."/>
            <person name="Stendel C."/>
            <person name="Bergmann C."/>
            <person name="Moser M."/>
            <person name="Breitbach-Faller N."/>
            <person name="Rudnik-Schoeneborn S."/>
            <person name="Blaschek A."/>
            <person name="Wolf N.I."/>
            <person name="Harting I."/>
            <person name="North K."/>
            <person name="Smith J."/>
            <person name="Muntoni F."/>
            <person name="Brockington M."/>
            <person name="Quijano-Roy S."/>
            <person name="Renault F."/>
            <person name="Herrmann R."/>
            <person name="Hendershot L.M."/>
            <person name="Schroeder J.M."/>
            <person name="Lochmueller H."/>
            <person name="Topaloglu H."/>
            <person name="Voit T."/>
            <person name="Weis J."/>
            <person name="Ebinger F."/>
            <person name="Zerres K."/>
        </authorList>
    </citation>
    <scope>TISSUE SPECIFICITY</scope>
</reference>
<reference key="7">
    <citation type="journal article" date="2010" name="Cell">
        <title>A tissue-specific atlas of mouse protein phosphorylation and expression.</title>
        <authorList>
            <person name="Huttlin E.L."/>
            <person name="Jedrychowski M.P."/>
            <person name="Elias J.E."/>
            <person name="Goswami T."/>
            <person name="Rad R."/>
            <person name="Beausoleil S.A."/>
            <person name="Villen J."/>
            <person name="Haas W."/>
            <person name="Sowa M.E."/>
            <person name="Gygi S.P."/>
        </authorList>
    </citation>
    <scope>IDENTIFICATION BY MASS SPECTROMETRY [LARGE SCALE ANALYSIS]</scope>
    <source>
        <tissue>Kidney</tissue>
        <tissue>Pancreas</tissue>
        <tissue>Spleen</tissue>
        <tissue>Testis</tissue>
    </source>
</reference>
<comment type="function">
    <text evidence="1">Required for protein translocation and folding in the endoplasmic reticulum (ER). Functions as a nucleotide exchange factor for the ER lumenal chaperone HSPA5.</text>
</comment>
<comment type="subunit">
    <text evidence="3">Interacts with HSPA5.</text>
</comment>
<comment type="subcellular location">
    <subcellularLocation>
        <location evidence="3">Endoplasmic reticulum lumen</location>
    </subcellularLocation>
</comment>
<comment type="tissue specificity">
    <text evidence="3 4 5">Expressed in several areas of the brain including the cerebellum, cerebral cortex, cortical neurons, glial cells of white matter, hippocampus, olfactory bulb, Purkinje cells, inferior olive and the choroids plexus. Also expressed in the eye and skeletal muscle.</text>
</comment>
<comment type="developmental stage">
    <text evidence="5">Expressed in the developing retina and epithelial cells of the lens at 12.5 dpc. Expressed in the developing cerebral cortex at 15.5 dpc.</text>
</comment>
<comment type="PTM">
    <text evidence="1">N-glycosylated.</text>
</comment>
<comment type="PTM">
    <text evidence="1">Ubiquitinated by the CRL2(FEM1A) and CRL2(FEM1C) complexes, which recognize the -Lys-Xaa-Xaa-Arg C-degron at the C-terminus, leading to its degradation.</text>
</comment>
<comment type="disruption phenotype">
    <text evidence="5">Mice develop adult-onset ataxia with cerebellar Purkinje cell loss. Affected cells have intracellular protein accumulations in the endoplasmic reticulum and the nucleus.</text>
</comment>
<comment type="similarity">
    <text evidence="6">Belongs to the SIL1 family.</text>
</comment>
<evidence type="ECO:0000250" key="1">
    <source>
        <dbReference type="UniProtKB" id="Q9H173"/>
    </source>
</evidence>
<evidence type="ECO:0000255" key="2"/>
<evidence type="ECO:0000269" key="3">
    <source>
    </source>
</evidence>
<evidence type="ECO:0000269" key="4">
    <source>
    </source>
</evidence>
<evidence type="ECO:0000269" key="5">
    <source>
    </source>
</evidence>
<evidence type="ECO:0000305" key="6"/>
<keyword id="KW-0256">Endoplasmic reticulum</keyword>
<keyword id="KW-0325">Glycoprotein</keyword>
<keyword id="KW-0653">Protein transport</keyword>
<keyword id="KW-1185">Reference proteome</keyword>
<keyword id="KW-0732">Signal</keyword>
<keyword id="KW-0811">Translocation</keyword>
<keyword id="KW-0813">Transport</keyword>
<keyword id="KW-0832">Ubl conjugation</keyword>
<organism>
    <name type="scientific">Mus musculus</name>
    <name type="common">Mouse</name>
    <dbReference type="NCBI Taxonomy" id="10090"/>
    <lineage>
        <taxon>Eukaryota</taxon>
        <taxon>Metazoa</taxon>
        <taxon>Chordata</taxon>
        <taxon>Craniata</taxon>
        <taxon>Vertebrata</taxon>
        <taxon>Euteleostomi</taxon>
        <taxon>Mammalia</taxon>
        <taxon>Eutheria</taxon>
        <taxon>Euarchontoglires</taxon>
        <taxon>Glires</taxon>
        <taxon>Rodentia</taxon>
        <taxon>Myomorpha</taxon>
        <taxon>Muroidea</taxon>
        <taxon>Muridae</taxon>
        <taxon>Murinae</taxon>
        <taxon>Mus</taxon>
        <taxon>Mus</taxon>
    </lineage>
</organism>
<protein>
    <recommendedName>
        <fullName>Nucleotide exchange factor SIL1</fullName>
    </recommendedName>
</protein>
<proteinExistence type="evidence at protein level"/>
<feature type="signal peptide" evidence="2">
    <location>
        <begin position="1"/>
        <end position="31"/>
    </location>
</feature>
<feature type="chain" id="PRO_0000223355" description="Nucleotide exchange factor SIL1">
    <location>
        <begin position="32"/>
        <end position="465"/>
    </location>
</feature>
<feature type="region of interest" description="Interaction with HSPA5 and localization to the endoplasmic reticulum" evidence="3">
    <location>
        <begin position="1"/>
        <end position="260"/>
    </location>
</feature>
<feature type="glycosylation site" description="N-linked (GlcNAc...) asparagine" evidence="2">
    <location>
        <position position="197"/>
    </location>
</feature>
<feature type="glycosylation site" description="N-linked (GlcNAc...) asparagine" evidence="2">
    <location>
        <position position="240"/>
    </location>
</feature>
<feature type="sequence conflict" description="In Ref. 1; CAC17789." evidence="6" ref="1">
    <original>K</original>
    <variation>T</variation>
    <location>
        <position position="143"/>
    </location>
</feature>
<feature type="sequence conflict" description="In Ref. 1; CAC17789." evidence="6" ref="1">
    <original>K</original>
    <variation>Q</variation>
    <location>
        <position position="152"/>
    </location>
</feature>
<sequence length="465" mass="52430">MAPQHLPSTRMASPGMLLGLLLTSCLTLCLSCQNSNNFALTNPEKSIHQESDTKETREEEELDTEILEVFHPTQEWQTLQPGQAVPAGSHVRMNLQTGVNEVKLQQEDKFQNNLKGFKRGRRLDINANTYTSQDLKSALAKFKEGTEMENSKDELARQATVKQLFRPIEELKKEFDELNVVLETDMQIMVRLINKFNSSSSSLEEKVAALFDLEYYVHQMDNAQDLLSFGGLQVVINGLNSTEPLVKEYAAFVLGAAFSSNPKVQVEAIEGGALQKLLVILATNQPLPAKKKVLFALCSLLRHFPYAQQQFLKLGGLQVLRSLVQEKSAKVLAVRVVTLLYDLVTEKMFAEEEAELTQDSSPEKLQQYRQVQLLPGLQEQGWCEITAQLLALPEHDAREKVLQTLGALLTTCRDRYRQDLQLSRTLGRLQAEYQALASLELQEGEDDGYFRELLASINSLMKELR</sequence>
<gene>
    <name type="primary">Sil1</name>
</gene>
<name>SIL1_MOUSE</name>
<accession>Q9EPK6</accession>
<accession>Q91V34</accession>